<protein>
    <recommendedName>
        <fullName>Putative D-3-phosphoglycerate dehydrogenase</fullName>
        <shortName>3-PGDH</shortName>
        <ecNumber>1.1.1.95</ecNumber>
    </recommendedName>
    <alternativeName>
        <fullName evidence="7">2-oxoglutarate reductase</fullName>
        <ecNumber evidence="3">1.1.1.399</ecNumber>
    </alternativeName>
</protein>
<comment type="function">
    <text evidence="3">Catalyzes the reversible oxidation of 3-phospho-D-glycerate to 3-phosphonooxypyruvate, the first step of the phosphorylated L-serine biosynthesis pathway. Also catalyzes the reversible oxidation of 2-hydroxyglutarate to 2-oxoglutarate.</text>
</comment>
<comment type="catalytic activity">
    <reaction>
        <text>(2R)-3-phosphoglycerate + NAD(+) = 3-phosphooxypyruvate + NADH + H(+)</text>
        <dbReference type="Rhea" id="RHEA:12641"/>
        <dbReference type="ChEBI" id="CHEBI:15378"/>
        <dbReference type="ChEBI" id="CHEBI:18110"/>
        <dbReference type="ChEBI" id="CHEBI:57540"/>
        <dbReference type="ChEBI" id="CHEBI:57945"/>
        <dbReference type="ChEBI" id="CHEBI:58272"/>
        <dbReference type="EC" id="1.1.1.95"/>
    </reaction>
</comment>
<comment type="catalytic activity">
    <reaction evidence="3">
        <text>(R)-2-hydroxyglutarate + NAD(+) = 2-oxoglutarate + NADH + H(+)</text>
        <dbReference type="Rhea" id="RHEA:49612"/>
        <dbReference type="ChEBI" id="CHEBI:15378"/>
        <dbReference type="ChEBI" id="CHEBI:15801"/>
        <dbReference type="ChEBI" id="CHEBI:16810"/>
        <dbReference type="ChEBI" id="CHEBI:57540"/>
        <dbReference type="ChEBI" id="CHEBI:57945"/>
        <dbReference type="EC" id="1.1.1.399"/>
    </reaction>
</comment>
<comment type="pathway">
    <text>Amino-acid biosynthesis; L-serine biosynthesis; L-serine from 3-phospho-D-glycerate: step 1/3.</text>
</comment>
<comment type="similarity">
    <text evidence="7">Belongs to the D-isomer specific 2-hydroxyacid dehydrogenase family.</text>
</comment>
<reference key="1">
    <citation type="journal article" date="2002" name="Nature">
        <title>The genome sequence of Schizosaccharomyces pombe.</title>
        <authorList>
            <person name="Wood V."/>
            <person name="Gwilliam R."/>
            <person name="Rajandream M.A."/>
            <person name="Lyne M.H."/>
            <person name="Lyne R."/>
            <person name="Stewart A."/>
            <person name="Sgouros J.G."/>
            <person name="Peat N."/>
            <person name="Hayles J."/>
            <person name="Baker S.G."/>
            <person name="Basham D."/>
            <person name="Bowman S."/>
            <person name="Brooks K."/>
            <person name="Brown D."/>
            <person name="Brown S."/>
            <person name="Chillingworth T."/>
            <person name="Churcher C.M."/>
            <person name="Collins M."/>
            <person name="Connor R."/>
            <person name="Cronin A."/>
            <person name="Davis P."/>
            <person name="Feltwell T."/>
            <person name="Fraser A."/>
            <person name="Gentles S."/>
            <person name="Goble A."/>
            <person name="Hamlin N."/>
            <person name="Harris D.E."/>
            <person name="Hidalgo J."/>
            <person name="Hodgson G."/>
            <person name="Holroyd S."/>
            <person name="Hornsby T."/>
            <person name="Howarth S."/>
            <person name="Huckle E.J."/>
            <person name="Hunt S."/>
            <person name="Jagels K."/>
            <person name="James K.D."/>
            <person name="Jones L."/>
            <person name="Jones M."/>
            <person name="Leather S."/>
            <person name="McDonald S."/>
            <person name="McLean J."/>
            <person name="Mooney P."/>
            <person name="Moule S."/>
            <person name="Mungall K.L."/>
            <person name="Murphy L.D."/>
            <person name="Niblett D."/>
            <person name="Odell C."/>
            <person name="Oliver K."/>
            <person name="O'Neil S."/>
            <person name="Pearson D."/>
            <person name="Quail M.A."/>
            <person name="Rabbinowitsch E."/>
            <person name="Rutherford K.M."/>
            <person name="Rutter S."/>
            <person name="Saunders D."/>
            <person name="Seeger K."/>
            <person name="Sharp S."/>
            <person name="Skelton J."/>
            <person name="Simmonds M.N."/>
            <person name="Squares R."/>
            <person name="Squares S."/>
            <person name="Stevens K."/>
            <person name="Taylor K."/>
            <person name="Taylor R.G."/>
            <person name="Tivey A."/>
            <person name="Walsh S.V."/>
            <person name="Warren T."/>
            <person name="Whitehead S."/>
            <person name="Woodward J.R."/>
            <person name="Volckaert G."/>
            <person name="Aert R."/>
            <person name="Robben J."/>
            <person name="Grymonprez B."/>
            <person name="Weltjens I."/>
            <person name="Vanstreels E."/>
            <person name="Rieger M."/>
            <person name="Schaefer M."/>
            <person name="Mueller-Auer S."/>
            <person name="Gabel C."/>
            <person name="Fuchs M."/>
            <person name="Duesterhoeft A."/>
            <person name="Fritzc C."/>
            <person name="Holzer E."/>
            <person name="Moestl D."/>
            <person name="Hilbert H."/>
            <person name="Borzym K."/>
            <person name="Langer I."/>
            <person name="Beck A."/>
            <person name="Lehrach H."/>
            <person name="Reinhardt R."/>
            <person name="Pohl T.M."/>
            <person name="Eger P."/>
            <person name="Zimmermann W."/>
            <person name="Wedler H."/>
            <person name="Wambutt R."/>
            <person name="Purnelle B."/>
            <person name="Goffeau A."/>
            <person name="Cadieu E."/>
            <person name="Dreano S."/>
            <person name="Gloux S."/>
            <person name="Lelaure V."/>
            <person name="Mottier S."/>
            <person name="Galibert F."/>
            <person name="Aves S.J."/>
            <person name="Xiang Z."/>
            <person name="Hunt C."/>
            <person name="Moore K."/>
            <person name="Hurst S.M."/>
            <person name="Lucas M."/>
            <person name="Rochet M."/>
            <person name="Gaillardin C."/>
            <person name="Tallada V.A."/>
            <person name="Garzon A."/>
            <person name="Thode G."/>
            <person name="Daga R.R."/>
            <person name="Cruzado L."/>
            <person name="Jimenez J."/>
            <person name="Sanchez M."/>
            <person name="del Rey F."/>
            <person name="Benito J."/>
            <person name="Dominguez A."/>
            <person name="Revuelta J.L."/>
            <person name="Moreno S."/>
            <person name="Armstrong J."/>
            <person name="Forsburg S.L."/>
            <person name="Cerutti L."/>
            <person name="Lowe T."/>
            <person name="McCombie W.R."/>
            <person name="Paulsen I."/>
            <person name="Potashkin J."/>
            <person name="Shpakovski G.V."/>
            <person name="Ussery D."/>
            <person name="Barrell B.G."/>
            <person name="Nurse P."/>
        </authorList>
    </citation>
    <scope>NUCLEOTIDE SEQUENCE [LARGE SCALE GENOMIC DNA]</scope>
    <source>
        <strain>972 / ATCC 24843</strain>
    </source>
</reference>
<reference key="2">
    <citation type="journal article" date="2008" name="J. Proteome Res.">
        <title>Phosphoproteome analysis of fission yeast.</title>
        <authorList>
            <person name="Wilson-Grady J.T."/>
            <person name="Villen J."/>
            <person name="Gygi S.P."/>
        </authorList>
    </citation>
    <scope>PHOSPHORYLATION [LARGE SCALE ANALYSIS] AT SER-87 AND SER-258</scope>
    <scope>IDENTIFICATION BY MASS SPECTROMETRY</scope>
</reference>
<accession>P87228</accession>
<accession>O59798</accession>
<evidence type="ECO:0000250" key="1"/>
<evidence type="ECO:0000250" key="2">
    <source>
        <dbReference type="UniProtKB" id="P0A9T0"/>
    </source>
</evidence>
<evidence type="ECO:0000250" key="3">
    <source>
        <dbReference type="UniProtKB" id="P40054"/>
    </source>
</evidence>
<evidence type="ECO:0000255" key="4">
    <source>
        <dbReference type="PROSITE-ProRule" id="PRU01007"/>
    </source>
</evidence>
<evidence type="ECO:0000256" key="5">
    <source>
        <dbReference type="SAM" id="MobiDB-lite"/>
    </source>
</evidence>
<evidence type="ECO:0000269" key="6">
    <source>
    </source>
</evidence>
<evidence type="ECO:0000305" key="7"/>
<name>SERA_SCHPO</name>
<dbReference type="EC" id="1.1.1.95"/>
<dbReference type="EC" id="1.1.1.399" evidence="3"/>
<dbReference type="EMBL" id="CU329672">
    <property type="protein sequence ID" value="CAB09778.1"/>
    <property type="molecule type" value="Genomic_DNA"/>
</dbReference>
<dbReference type="PIR" id="T41375">
    <property type="entry name" value="T41375"/>
</dbReference>
<dbReference type="RefSeq" id="NP_587837.1">
    <property type="nucleotide sequence ID" value="NM_001022830.2"/>
</dbReference>
<dbReference type="SMR" id="P87228"/>
<dbReference type="BioGRID" id="276053">
    <property type="interactions" value="10"/>
</dbReference>
<dbReference type="FunCoup" id="P87228">
    <property type="interactions" value="302"/>
</dbReference>
<dbReference type="STRING" id="284812.P87228"/>
<dbReference type="iPTMnet" id="P87228"/>
<dbReference type="PaxDb" id="4896-SPCC364.07.1"/>
<dbReference type="EnsemblFungi" id="SPCC364.07.1">
    <property type="protein sequence ID" value="SPCC364.07.1:pep"/>
    <property type="gene ID" value="SPCC364.07"/>
</dbReference>
<dbReference type="PomBase" id="SPCC364.07"/>
<dbReference type="VEuPathDB" id="FungiDB:SPCC364.07"/>
<dbReference type="eggNOG" id="KOG0068">
    <property type="taxonomic scope" value="Eukaryota"/>
</dbReference>
<dbReference type="HOGENOM" id="CLU_019796_9_2_1"/>
<dbReference type="InParanoid" id="P87228"/>
<dbReference type="OMA" id="SKGCWEV"/>
<dbReference type="PhylomeDB" id="P87228"/>
<dbReference type="UniPathway" id="UPA00135">
    <property type="reaction ID" value="UER00196"/>
</dbReference>
<dbReference type="PRO" id="PR:P87228"/>
<dbReference type="Proteomes" id="UP000002485">
    <property type="component" value="Chromosome III"/>
</dbReference>
<dbReference type="GO" id="GO:0005829">
    <property type="term" value="C:cytosol"/>
    <property type="evidence" value="ECO:0007005"/>
    <property type="project" value="PomBase"/>
</dbReference>
<dbReference type="GO" id="GO:0051287">
    <property type="term" value="F:NAD binding"/>
    <property type="evidence" value="ECO:0007669"/>
    <property type="project" value="InterPro"/>
</dbReference>
<dbReference type="GO" id="GO:0004617">
    <property type="term" value="F:phosphoglycerate dehydrogenase activity"/>
    <property type="evidence" value="ECO:0000250"/>
    <property type="project" value="PomBase"/>
</dbReference>
<dbReference type="GO" id="GO:0006564">
    <property type="term" value="P:L-serine biosynthetic process"/>
    <property type="evidence" value="ECO:0000250"/>
    <property type="project" value="PomBase"/>
</dbReference>
<dbReference type="CDD" id="cd04901">
    <property type="entry name" value="ACT_3PGDH"/>
    <property type="match status" value="1"/>
</dbReference>
<dbReference type="CDD" id="cd12176">
    <property type="entry name" value="PGDH_3"/>
    <property type="match status" value="1"/>
</dbReference>
<dbReference type="FunFam" id="3.40.50.720:FF:000041">
    <property type="entry name" value="D-3-phosphoglycerate dehydrogenase"/>
    <property type="match status" value="1"/>
</dbReference>
<dbReference type="Gene3D" id="3.30.70.260">
    <property type="match status" value="1"/>
</dbReference>
<dbReference type="Gene3D" id="3.40.50.720">
    <property type="entry name" value="NAD(P)-binding Rossmann-like Domain"/>
    <property type="match status" value="2"/>
</dbReference>
<dbReference type="InterPro" id="IPR045865">
    <property type="entry name" value="ACT-like_dom_sf"/>
</dbReference>
<dbReference type="InterPro" id="IPR002912">
    <property type="entry name" value="ACT_dom"/>
</dbReference>
<dbReference type="InterPro" id="IPR050418">
    <property type="entry name" value="D-iso_2-hydroxyacid_DH_PdxB"/>
</dbReference>
<dbReference type="InterPro" id="IPR006139">
    <property type="entry name" value="D-isomer_2_OHA_DH_cat_dom"/>
</dbReference>
<dbReference type="InterPro" id="IPR029753">
    <property type="entry name" value="D-isomer_DH_CS"/>
</dbReference>
<dbReference type="InterPro" id="IPR029752">
    <property type="entry name" value="D-isomer_DH_CS1"/>
</dbReference>
<dbReference type="InterPro" id="IPR006140">
    <property type="entry name" value="D-isomer_DH_NAD-bd"/>
</dbReference>
<dbReference type="InterPro" id="IPR036291">
    <property type="entry name" value="NAD(P)-bd_dom_sf"/>
</dbReference>
<dbReference type="NCBIfam" id="NF008759">
    <property type="entry name" value="PRK11790.1"/>
    <property type="match status" value="1"/>
</dbReference>
<dbReference type="PANTHER" id="PTHR43761:SF1">
    <property type="entry name" value="D-ISOMER SPECIFIC 2-HYDROXYACID DEHYDROGENASE CATALYTIC DOMAIN-CONTAINING PROTEIN-RELATED"/>
    <property type="match status" value="1"/>
</dbReference>
<dbReference type="PANTHER" id="PTHR43761">
    <property type="entry name" value="D-ISOMER SPECIFIC 2-HYDROXYACID DEHYDROGENASE FAMILY PROTEIN (AFU_ORTHOLOGUE AFUA_1G13630)"/>
    <property type="match status" value="1"/>
</dbReference>
<dbReference type="Pfam" id="PF00389">
    <property type="entry name" value="2-Hacid_dh"/>
    <property type="match status" value="1"/>
</dbReference>
<dbReference type="Pfam" id="PF02826">
    <property type="entry name" value="2-Hacid_dh_C"/>
    <property type="match status" value="1"/>
</dbReference>
<dbReference type="SUPFAM" id="SSF55021">
    <property type="entry name" value="ACT-like"/>
    <property type="match status" value="1"/>
</dbReference>
<dbReference type="SUPFAM" id="SSF52283">
    <property type="entry name" value="Formate/glycerate dehydrogenase catalytic domain-like"/>
    <property type="match status" value="1"/>
</dbReference>
<dbReference type="SUPFAM" id="SSF51735">
    <property type="entry name" value="NAD(P)-binding Rossmann-fold domains"/>
    <property type="match status" value="1"/>
</dbReference>
<dbReference type="PROSITE" id="PS51671">
    <property type="entry name" value="ACT"/>
    <property type="match status" value="1"/>
</dbReference>
<dbReference type="PROSITE" id="PS00065">
    <property type="entry name" value="D_2_HYDROXYACID_DH_1"/>
    <property type="match status" value="1"/>
</dbReference>
<dbReference type="PROSITE" id="PS00670">
    <property type="entry name" value="D_2_HYDROXYACID_DH_2"/>
    <property type="match status" value="1"/>
</dbReference>
<dbReference type="PROSITE" id="PS00671">
    <property type="entry name" value="D_2_HYDROXYACID_DH_3"/>
    <property type="match status" value="1"/>
</dbReference>
<keyword id="KW-0028">Amino-acid biosynthesis</keyword>
<keyword id="KW-0520">NAD</keyword>
<keyword id="KW-0560">Oxidoreductase</keyword>
<keyword id="KW-0597">Phosphoprotein</keyword>
<keyword id="KW-1185">Reference proteome</keyword>
<keyword id="KW-0718">Serine biosynthesis</keyword>
<proteinExistence type="evidence at protein level"/>
<feature type="chain" id="PRO_0000076017" description="Putative D-3-phosphoglycerate dehydrogenase">
    <location>
        <begin position="1"/>
        <end position="466"/>
    </location>
</feature>
<feature type="domain" description="ACT" evidence="4">
    <location>
        <begin position="396"/>
        <end position="466"/>
    </location>
</feature>
<feature type="region of interest" description="Disordered" evidence="5">
    <location>
        <begin position="1"/>
        <end position="26"/>
    </location>
</feature>
<feature type="compositionally biased region" description="Basic and acidic residues" evidence="5">
    <location>
        <begin position="1"/>
        <end position="15"/>
    </location>
</feature>
<feature type="compositionally biased region" description="Polar residues" evidence="5">
    <location>
        <begin position="16"/>
        <end position="26"/>
    </location>
</feature>
<feature type="active site" evidence="1">
    <location>
        <position position="284"/>
    </location>
</feature>
<feature type="active site" evidence="1">
    <location>
        <position position="313"/>
    </location>
</feature>
<feature type="active site" description="Proton donor" evidence="1">
    <location>
        <position position="344"/>
    </location>
</feature>
<feature type="binding site" evidence="2">
    <location>
        <begin position="205"/>
        <end position="206"/>
    </location>
    <ligand>
        <name>NAD(+)</name>
        <dbReference type="ChEBI" id="CHEBI:57540"/>
    </ligand>
</feature>
<feature type="binding site" evidence="2">
    <location>
        <position position="225"/>
    </location>
    <ligand>
        <name>NAD(+)</name>
        <dbReference type="ChEBI" id="CHEBI:57540"/>
    </ligand>
</feature>
<feature type="binding site" evidence="2">
    <location>
        <begin position="282"/>
        <end position="284"/>
    </location>
    <ligand>
        <name>NAD(+)</name>
        <dbReference type="ChEBI" id="CHEBI:57540"/>
    </ligand>
</feature>
<feature type="binding site" evidence="2">
    <location>
        <position position="308"/>
    </location>
    <ligand>
        <name>NAD(+)</name>
        <dbReference type="ChEBI" id="CHEBI:57540"/>
    </ligand>
</feature>
<feature type="binding site" evidence="2">
    <location>
        <begin position="344"/>
        <end position="347"/>
    </location>
    <ligand>
        <name>NAD(+)</name>
        <dbReference type="ChEBI" id="CHEBI:57540"/>
    </ligand>
</feature>
<feature type="modified residue" description="Phosphoserine" evidence="6">
    <location>
        <position position="87"/>
    </location>
</feature>
<feature type="modified residue" description="Phosphoserine" evidence="6">
    <location>
        <position position="258"/>
    </location>
</feature>
<gene>
    <name type="ORF">SPCC364.07</name>
    <name type="ORF">SPCC4G3.01</name>
</gene>
<sequence>MDIKGGRRGNVEDSLNKLSLSPPDNNSSFLSNHFQVRKSYSQAPARTLKPFASEDIKILLLENVNQSALSNLKDEGYQVEFLKTSMSEDDLVEKIKGVHAIGIRSKTRLTRRVLEAADSLIVIGCFCIGTNQVDLDFAAERGIAVFNSPYANSRSVAELVIGYIISLARQVGDRSLELHRGEWNKVSSGCWEIRGKTLGIIGYGHIGSQLSVLAEAMGLHVVYYDILPIMPLGSAKQLSSLPELLHRADFVSLHVPASPETKNMISSKEFAAMKEGSYLINASRGTVVDIPALVDASKSGKIAGAAIDVYPSEPAGNGKDKFVDSLNSWTSELTHCKNIILTPHIGGSTEEAQYNIGIEVSEALTRYINEGNSIGAVNFPEVSLRSLTEADRNAARVLFVHRNVPGVLRQVNELFIDHNIKSQFSDSRGDIAYLVADISDCTPGSLEALHQKLESLPCKINTRLLY</sequence>
<organism>
    <name type="scientific">Schizosaccharomyces pombe (strain 972 / ATCC 24843)</name>
    <name type="common">Fission yeast</name>
    <dbReference type="NCBI Taxonomy" id="284812"/>
    <lineage>
        <taxon>Eukaryota</taxon>
        <taxon>Fungi</taxon>
        <taxon>Dikarya</taxon>
        <taxon>Ascomycota</taxon>
        <taxon>Taphrinomycotina</taxon>
        <taxon>Schizosaccharomycetes</taxon>
        <taxon>Schizosaccharomycetales</taxon>
        <taxon>Schizosaccharomycetaceae</taxon>
        <taxon>Schizosaccharomyces</taxon>
    </lineage>
</organism>